<gene>
    <name evidence="1" type="primary">rpmF</name>
    <name type="ordered locus">Oant_1128</name>
</gene>
<dbReference type="EMBL" id="CP000758">
    <property type="protein sequence ID" value="ABS13848.1"/>
    <property type="molecule type" value="Genomic_DNA"/>
</dbReference>
<dbReference type="RefSeq" id="WP_006467787.1">
    <property type="nucleotide sequence ID" value="NC_009667.1"/>
</dbReference>
<dbReference type="SMR" id="A6WXZ4"/>
<dbReference type="STRING" id="439375.Oant_1128"/>
<dbReference type="GeneID" id="93107972"/>
<dbReference type="KEGG" id="oan:Oant_1128"/>
<dbReference type="eggNOG" id="COG0333">
    <property type="taxonomic scope" value="Bacteria"/>
</dbReference>
<dbReference type="HOGENOM" id="CLU_129084_2_2_5"/>
<dbReference type="Proteomes" id="UP000002301">
    <property type="component" value="Chromosome 1"/>
</dbReference>
<dbReference type="GO" id="GO:0015934">
    <property type="term" value="C:large ribosomal subunit"/>
    <property type="evidence" value="ECO:0007669"/>
    <property type="project" value="InterPro"/>
</dbReference>
<dbReference type="GO" id="GO:0003735">
    <property type="term" value="F:structural constituent of ribosome"/>
    <property type="evidence" value="ECO:0007669"/>
    <property type="project" value="InterPro"/>
</dbReference>
<dbReference type="GO" id="GO:0006412">
    <property type="term" value="P:translation"/>
    <property type="evidence" value="ECO:0007669"/>
    <property type="project" value="UniProtKB-UniRule"/>
</dbReference>
<dbReference type="Gene3D" id="1.20.5.640">
    <property type="entry name" value="Single helix bin"/>
    <property type="match status" value="1"/>
</dbReference>
<dbReference type="HAMAP" id="MF_00340">
    <property type="entry name" value="Ribosomal_bL32"/>
    <property type="match status" value="1"/>
</dbReference>
<dbReference type="InterPro" id="IPR002677">
    <property type="entry name" value="Ribosomal_bL32"/>
</dbReference>
<dbReference type="InterPro" id="IPR044957">
    <property type="entry name" value="Ribosomal_bL32_bact"/>
</dbReference>
<dbReference type="InterPro" id="IPR011332">
    <property type="entry name" value="Ribosomal_zn-bd"/>
</dbReference>
<dbReference type="NCBIfam" id="TIGR01031">
    <property type="entry name" value="rpmF_bact"/>
    <property type="match status" value="1"/>
</dbReference>
<dbReference type="PANTHER" id="PTHR35534">
    <property type="entry name" value="50S RIBOSOMAL PROTEIN L32"/>
    <property type="match status" value="1"/>
</dbReference>
<dbReference type="PANTHER" id="PTHR35534:SF1">
    <property type="entry name" value="LARGE RIBOSOMAL SUBUNIT PROTEIN BL32"/>
    <property type="match status" value="1"/>
</dbReference>
<dbReference type="Pfam" id="PF01783">
    <property type="entry name" value="Ribosomal_L32p"/>
    <property type="match status" value="1"/>
</dbReference>
<dbReference type="SUPFAM" id="SSF57829">
    <property type="entry name" value="Zn-binding ribosomal proteins"/>
    <property type="match status" value="1"/>
</dbReference>
<comment type="similarity">
    <text evidence="1">Belongs to the bacterial ribosomal protein bL32 family.</text>
</comment>
<name>RL32_BRUA4</name>
<sequence length="59" mass="6736">MAVPKRKTSPSKRGMRRSADALKAPTYVEDKNSGELRRPHHIDLKSGMYRGRQVLEAKE</sequence>
<reference key="1">
    <citation type="journal article" date="2011" name="J. Bacteriol.">
        <title>Genome of Ochrobactrum anthropi ATCC 49188 T, a versatile opportunistic pathogen and symbiont of several eukaryotic hosts.</title>
        <authorList>
            <person name="Chain P.S."/>
            <person name="Lang D.M."/>
            <person name="Comerci D.J."/>
            <person name="Malfatti S.A."/>
            <person name="Vergez L.M."/>
            <person name="Shin M."/>
            <person name="Ugalde R.A."/>
            <person name="Garcia E."/>
            <person name="Tolmasky M.E."/>
        </authorList>
    </citation>
    <scope>NUCLEOTIDE SEQUENCE [LARGE SCALE GENOMIC DNA]</scope>
    <source>
        <strain>ATCC 49188 / DSM 6882 / CCUG 24695 / JCM 21032 / LMG 3331 / NBRC 15819 / NCTC 12168 / Alc 37</strain>
    </source>
</reference>
<evidence type="ECO:0000255" key="1">
    <source>
        <dbReference type="HAMAP-Rule" id="MF_00340"/>
    </source>
</evidence>
<evidence type="ECO:0000256" key="2">
    <source>
        <dbReference type="SAM" id="MobiDB-lite"/>
    </source>
</evidence>
<evidence type="ECO:0000305" key="3"/>
<accession>A6WXZ4</accession>
<organism>
    <name type="scientific">Brucella anthropi (strain ATCC 49188 / DSM 6882 / CCUG 24695 / JCM 21032 / LMG 3331 / NBRC 15819 / NCTC 12168 / Alc 37)</name>
    <name type="common">Ochrobactrum anthropi</name>
    <dbReference type="NCBI Taxonomy" id="439375"/>
    <lineage>
        <taxon>Bacteria</taxon>
        <taxon>Pseudomonadati</taxon>
        <taxon>Pseudomonadota</taxon>
        <taxon>Alphaproteobacteria</taxon>
        <taxon>Hyphomicrobiales</taxon>
        <taxon>Brucellaceae</taxon>
        <taxon>Brucella/Ochrobactrum group</taxon>
        <taxon>Brucella</taxon>
    </lineage>
</organism>
<proteinExistence type="inferred from homology"/>
<protein>
    <recommendedName>
        <fullName evidence="1">Large ribosomal subunit protein bL32</fullName>
    </recommendedName>
    <alternativeName>
        <fullName evidence="3">50S ribosomal protein L32</fullName>
    </alternativeName>
</protein>
<keyword id="KW-1185">Reference proteome</keyword>
<keyword id="KW-0687">Ribonucleoprotein</keyword>
<keyword id="KW-0689">Ribosomal protein</keyword>
<feature type="chain" id="PRO_1000005067" description="Large ribosomal subunit protein bL32">
    <location>
        <begin position="1"/>
        <end position="59"/>
    </location>
</feature>
<feature type="region of interest" description="Disordered" evidence="2">
    <location>
        <begin position="1"/>
        <end position="59"/>
    </location>
</feature>
<feature type="compositionally biased region" description="Basic residues" evidence="2">
    <location>
        <begin position="1"/>
        <end position="16"/>
    </location>
</feature>
<feature type="compositionally biased region" description="Basic and acidic residues" evidence="2">
    <location>
        <begin position="28"/>
        <end position="44"/>
    </location>
</feature>